<organism>
    <name type="scientific">Debaryomyces hansenii (strain ATCC 36239 / CBS 767 / BCRC 21394 / JCM 1990 / NBRC 0083 / IGC 2968)</name>
    <name type="common">Yeast</name>
    <name type="synonym">Torulaspora hansenii</name>
    <dbReference type="NCBI Taxonomy" id="284592"/>
    <lineage>
        <taxon>Eukaryota</taxon>
        <taxon>Fungi</taxon>
        <taxon>Dikarya</taxon>
        <taxon>Ascomycota</taxon>
        <taxon>Saccharomycotina</taxon>
        <taxon>Pichiomycetes</taxon>
        <taxon>Debaryomycetaceae</taxon>
        <taxon>Debaryomyces</taxon>
    </lineage>
</organism>
<evidence type="ECO:0000250" key="1">
    <source>
        <dbReference type="UniProtKB" id="P16661"/>
    </source>
</evidence>
<evidence type="ECO:0000255" key="2"/>
<evidence type="ECO:0000305" key="3"/>
<feature type="chain" id="PRO_0000080255" description="Chitobiosyldiphosphodolichol beta-mannosyltransferase">
    <location>
        <begin position="1"/>
        <end position="472"/>
    </location>
</feature>
<feature type="topological domain" description="Lumenal" evidence="1">
    <location>
        <begin position="1"/>
        <end position="20"/>
    </location>
</feature>
<feature type="transmembrane region" description="Helical" evidence="2">
    <location>
        <begin position="21"/>
        <end position="41"/>
    </location>
</feature>
<feature type="topological domain" description="Cytoplasmic" evidence="1">
    <location>
        <begin position="42"/>
        <end position="118"/>
    </location>
</feature>
<feature type="intramembrane region" description="Helical" evidence="2">
    <location>
        <begin position="119"/>
        <end position="139"/>
    </location>
</feature>
<feature type="topological domain" description="Cytoplasmic" evidence="1">
    <location>
        <begin position="140"/>
        <end position="472"/>
    </location>
</feature>
<reference key="1">
    <citation type="journal article" date="2004" name="Nature">
        <title>Genome evolution in yeasts.</title>
        <authorList>
            <person name="Dujon B."/>
            <person name="Sherman D."/>
            <person name="Fischer G."/>
            <person name="Durrens P."/>
            <person name="Casaregola S."/>
            <person name="Lafontaine I."/>
            <person name="de Montigny J."/>
            <person name="Marck C."/>
            <person name="Neuveglise C."/>
            <person name="Talla E."/>
            <person name="Goffard N."/>
            <person name="Frangeul L."/>
            <person name="Aigle M."/>
            <person name="Anthouard V."/>
            <person name="Babour A."/>
            <person name="Barbe V."/>
            <person name="Barnay S."/>
            <person name="Blanchin S."/>
            <person name="Beckerich J.-M."/>
            <person name="Beyne E."/>
            <person name="Bleykasten C."/>
            <person name="Boisrame A."/>
            <person name="Boyer J."/>
            <person name="Cattolico L."/>
            <person name="Confanioleri F."/>
            <person name="de Daruvar A."/>
            <person name="Despons L."/>
            <person name="Fabre E."/>
            <person name="Fairhead C."/>
            <person name="Ferry-Dumazet H."/>
            <person name="Groppi A."/>
            <person name="Hantraye F."/>
            <person name="Hennequin C."/>
            <person name="Jauniaux N."/>
            <person name="Joyet P."/>
            <person name="Kachouri R."/>
            <person name="Kerrest A."/>
            <person name="Koszul R."/>
            <person name="Lemaire M."/>
            <person name="Lesur I."/>
            <person name="Ma L."/>
            <person name="Muller H."/>
            <person name="Nicaud J.-M."/>
            <person name="Nikolski M."/>
            <person name="Oztas S."/>
            <person name="Ozier-Kalogeropoulos O."/>
            <person name="Pellenz S."/>
            <person name="Potier S."/>
            <person name="Richard G.-F."/>
            <person name="Straub M.-L."/>
            <person name="Suleau A."/>
            <person name="Swennen D."/>
            <person name="Tekaia F."/>
            <person name="Wesolowski-Louvel M."/>
            <person name="Westhof E."/>
            <person name="Wirth B."/>
            <person name="Zeniou-Meyer M."/>
            <person name="Zivanovic Y."/>
            <person name="Bolotin-Fukuhara M."/>
            <person name="Thierry A."/>
            <person name="Bouchier C."/>
            <person name="Caudron B."/>
            <person name="Scarpelli C."/>
            <person name="Gaillardin C."/>
            <person name="Weissenbach J."/>
            <person name="Wincker P."/>
            <person name="Souciet J.-L."/>
        </authorList>
    </citation>
    <scope>NUCLEOTIDE SEQUENCE [LARGE SCALE GENOMIC DNA]</scope>
    <source>
        <strain>ATCC 36239 / CBS 767 / BCRC 21394 / JCM 1990 / NBRC 0083 / IGC 2968</strain>
    </source>
</reference>
<comment type="function">
    <text evidence="1">Participates in the formation of the lipid-linked precursor oligosaccharide for N-glycosylation. Involved in assembling the dolichol-pyrophosphate-GlcNAc(2)-Man(5) intermediate on the cytoplasmic surface of the ER.</text>
</comment>
<comment type="catalytic activity">
    <reaction evidence="1">
        <text>an N,N'-diacetylchitobiosyl-diphospho-di-trans,poly-cis-dolichol + GDP-alpha-D-mannose = a beta-D-Man-(1-&gt;4)-beta-D-GlcNAc-(1-&gt;4)-alpha-D-GlcNAc-diphospho-di-trans,poly-cis-dolichol + GDP + H(+)</text>
        <dbReference type="Rhea" id="RHEA:13865"/>
        <dbReference type="Rhea" id="RHEA-COMP:19510"/>
        <dbReference type="Rhea" id="RHEA-COMP:19511"/>
        <dbReference type="ChEBI" id="CHEBI:15378"/>
        <dbReference type="ChEBI" id="CHEBI:57269"/>
        <dbReference type="ChEBI" id="CHEBI:57527"/>
        <dbReference type="ChEBI" id="CHEBI:58189"/>
        <dbReference type="ChEBI" id="CHEBI:58472"/>
        <dbReference type="EC" id="2.4.1.142"/>
    </reaction>
    <physiologicalReaction direction="left-to-right" evidence="1">
        <dbReference type="Rhea" id="RHEA:13866"/>
    </physiologicalReaction>
</comment>
<comment type="pathway">
    <text evidence="1">Protein modification; protein glycosylation.</text>
</comment>
<comment type="subcellular location">
    <subcellularLocation>
        <location evidence="1">Endoplasmic reticulum membrane</location>
        <topology evidence="1">Single-pass membrane protein</topology>
    </subcellularLocation>
</comment>
<comment type="similarity">
    <text evidence="3">Belongs to the glycosyltransferase group 1 family.</text>
</comment>
<gene>
    <name type="primary">ALG1</name>
    <name type="ordered locus">DEHA2D10516g</name>
</gene>
<protein>
    <recommendedName>
        <fullName evidence="1">Chitobiosyldiphosphodolichol beta-mannosyltransferase</fullName>
        <ecNumber evidence="1">2.4.1.142</ecNumber>
    </recommendedName>
    <alternativeName>
        <fullName>Asparagine-linked glycosylation protein 1</fullName>
    </alternativeName>
    <alternativeName>
        <fullName>Beta-1,4-mannosyltransferase</fullName>
    </alternativeName>
    <alternativeName>
        <fullName>GDP-Man:GlcNAc2-PP-dolichol mannosyltransferase</fullName>
    </alternativeName>
    <alternativeName>
        <fullName>GDP-mannose-dolichol diphosphochitobiose mannosyltransferase</fullName>
    </alternativeName>
</protein>
<keyword id="KW-0256">Endoplasmic reticulum</keyword>
<keyword id="KW-0328">Glycosyltransferase</keyword>
<keyword id="KW-0472">Membrane</keyword>
<keyword id="KW-1185">Reference proteome</keyword>
<keyword id="KW-0808">Transferase</keyword>
<keyword id="KW-0812">Transmembrane</keyword>
<keyword id="KW-1133">Transmembrane helix</keyword>
<accession>Q6BS98</accession>
<accession>B5RTG4</accession>
<name>ALG1_DEBHA</name>
<sequence>MEEFQFIKYKGFDHVFKYSGPWLWWLVGFYLCLPILAYTLLPYLTMNGTISGKRKTVSIFVLGDLGHSPRMCYHAKSFSKLDYYVNLCGYLEEQPPFDIIDDINIDIYPITVTKNTSNLPFILFAAKKMVVQFFQLLKLLSDFRGTDYVLIQNPPSIPILLIVLAYIKVFSRKTKLIIDWHNLNYTILNLKFQNLKHPLVRILKTYERVLGQFADYNITVTRQMKEFLIKEFNFNKKKIITLHDRPGEQFKPLESLGVTKQEILESHDIFRDIQNISKYKILVSSTSFTPDEDFNLLLSALNQYDNSLAERGLPPILIIITGKGPLKSQFLQKVKQLNFSDNVIIKNAWLSSEDYPLILSVADLSISLHTSSSGIDLPMKIVDFFGCGIPVITLRFPAIGELVTHGTNGLITKSDKDSSVNESQEIYRLLTEAFKNDELLDKIKQGALKESNLRWEENWNNKMGKRFEYSTD</sequence>
<proteinExistence type="inferred from homology"/>
<dbReference type="EC" id="2.4.1.142" evidence="1"/>
<dbReference type="EMBL" id="CR382136">
    <property type="protein sequence ID" value="CAR65649.1"/>
    <property type="molecule type" value="Genomic_DNA"/>
</dbReference>
<dbReference type="RefSeq" id="XP_002770294.1">
    <property type="nucleotide sequence ID" value="XM_002770248.1"/>
</dbReference>
<dbReference type="SMR" id="Q6BS98"/>
<dbReference type="FunCoup" id="Q6BS98">
    <property type="interactions" value="935"/>
</dbReference>
<dbReference type="STRING" id="284592.Q6BS98"/>
<dbReference type="CAZy" id="GT33">
    <property type="family name" value="Glycosyltransferase Family 33"/>
</dbReference>
<dbReference type="GlyCosmos" id="Q6BS98">
    <property type="glycosylation" value="6 sites, No reported glycans"/>
</dbReference>
<dbReference type="GeneID" id="8998507"/>
<dbReference type="KEGG" id="dha:DEHA2D10516g"/>
<dbReference type="VEuPathDB" id="FungiDB:DEHA2D10516g"/>
<dbReference type="eggNOG" id="KOG2941">
    <property type="taxonomic scope" value="Eukaryota"/>
</dbReference>
<dbReference type="HOGENOM" id="CLU_012079_0_0_1"/>
<dbReference type="InParanoid" id="Q6BS98"/>
<dbReference type="OMA" id="CKLIIDW"/>
<dbReference type="OrthoDB" id="614844at2759"/>
<dbReference type="UniPathway" id="UPA00378"/>
<dbReference type="Proteomes" id="UP000000599">
    <property type="component" value="Chromosome D"/>
</dbReference>
<dbReference type="GO" id="GO:0098554">
    <property type="term" value="C:cytoplasmic side of endoplasmic reticulum membrane"/>
    <property type="evidence" value="ECO:0000250"/>
    <property type="project" value="UniProtKB"/>
</dbReference>
<dbReference type="GO" id="GO:0004578">
    <property type="term" value="F:chitobiosyldiphosphodolichol beta-mannosyltransferase activity"/>
    <property type="evidence" value="ECO:0000250"/>
    <property type="project" value="UniProtKB"/>
</dbReference>
<dbReference type="GO" id="GO:0006488">
    <property type="term" value="P:dolichol-linked oligosaccharide biosynthetic process"/>
    <property type="evidence" value="ECO:0000250"/>
    <property type="project" value="UniProtKB"/>
</dbReference>
<dbReference type="Gene3D" id="3.40.50.2000">
    <property type="entry name" value="Glycogen Phosphorylase B"/>
    <property type="match status" value="2"/>
</dbReference>
<dbReference type="InterPro" id="IPR026051">
    <property type="entry name" value="ALG1-like"/>
</dbReference>
<dbReference type="InterPro" id="IPR001296">
    <property type="entry name" value="Glyco_trans_1"/>
</dbReference>
<dbReference type="PANTHER" id="PTHR13036">
    <property type="entry name" value="BETA1,4 MANNOSYLTRANSFERASE"/>
    <property type="match status" value="1"/>
</dbReference>
<dbReference type="PANTHER" id="PTHR13036:SF0">
    <property type="entry name" value="CHITOBIOSYLDIPHOSPHODOLICHOL BETA-MANNOSYLTRANSFERASE"/>
    <property type="match status" value="1"/>
</dbReference>
<dbReference type="Pfam" id="PF00534">
    <property type="entry name" value="Glycos_transf_1"/>
    <property type="match status" value="1"/>
</dbReference>
<dbReference type="SUPFAM" id="SSF53756">
    <property type="entry name" value="UDP-Glycosyltransferase/glycogen phosphorylase"/>
    <property type="match status" value="1"/>
</dbReference>